<evidence type="ECO:0000250" key="1"/>
<evidence type="ECO:0000255" key="2">
    <source>
        <dbReference type="HAMAP-Rule" id="MF_00100"/>
    </source>
</evidence>
<evidence type="ECO:0000256" key="3">
    <source>
        <dbReference type="SAM" id="MobiDB-lite"/>
    </source>
</evidence>
<evidence type="ECO:0000305" key="4"/>
<keyword id="KW-0963">Cytoplasm</keyword>
<keyword id="KW-0342">GTP-binding</keyword>
<keyword id="KW-0396">Initiation factor</keyword>
<keyword id="KW-0547">Nucleotide-binding</keyword>
<keyword id="KW-0648">Protein biosynthesis</keyword>
<organism>
    <name type="scientific">Xanthomonas campestris pv. campestris (strain 8004)</name>
    <dbReference type="NCBI Taxonomy" id="314565"/>
    <lineage>
        <taxon>Bacteria</taxon>
        <taxon>Pseudomonadati</taxon>
        <taxon>Pseudomonadota</taxon>
        <taxon>Gammaproteobacteria</taxon>
        <taxon>Lysobacterales</taxon>
        <taxon>Lysobacteraceae</taxon>
        <taxon>Xanthomonas</taxon>
    </lineage>
</organism>
<comment type="function">
    <text evidence="2">One of the essential components for the initiation of protein synthesis. Protects formylmethionyl-tRNA from spontaneous hydrolysis and promotes its binding to the 30S ribosomal subunits. Also involved in the hydrolysis of GTP during the formation of the 70S ribosomal complex.</text>
</comment>
<comment type="subcellular location">
    <subcellularLocation>
        <location evidence="2">Cytoplasm</location>
    </subcellularLocation>
</comment>
<comment type="similarity">
    <text evidence="2">Belongs to the TRAFAC class translation factor GTPase superfamily. Classic translation factor GTPase family. IF-2 subfamily.</text>
</comment>
<comment type="sequence caution" evidence="4">
    <conflict type="erroneous initiation">
        <sequence resource="EMBL-CDS" id="AAY48671"/>
    </conflict>
</comment>
<feature type="chain" id="PRO_0000228261" description="Translation initiation factor IF-2">
    <location>
        <begin position="1"/>
        <end position="902"/>
    </location>
</feature>
<feature type="domain" description="tr-type G">
    <location>
        <begin position="401"/>
        <end position="570"/>
    </location>
</feature>
<feature type="region of interest" description="Disordered" evidence="3">
    <location>
        <begin position="137"/>
        <end position="248"/>
    </location>
</feature>
<feature type="region of interest" description="Disordered" evidence="3">
    <location>
        <begin position="266"/>
        <end position="314"/>
    </location>
</feature>
<feature type="region of interest" description="G1" evidence="1">
    <location>
        <begin position="410"/>
        <end position="417"/>
    </location>
</feature>
<feature type="region of interest" description="G2" evidence="1">
    <location>
        <begin position="435"/>
        <end position="439"/>
    </location>
</feature>
<feature type="region of interest" description="G3" evidence="1">
    <location>
        <begin position="456"/>
        <end position="459"/>
    </location>
</feature>
<feature type="region of interest" description="G4" evidence="1">
    <location>
        <begin position="510"/>
        <end position="513"/>
    </location>
</feature>
<feature type="region of interest" description="G5" evidence="1">
    <location>
        <begin position="546"/>
        <end position="548"/>
    </location>
</feature>
<feature type="compositionally biased region" description="Basic and acidic residues" evidence="3">
    <location>
        <begin position="137"/>
        <end position="177"/>
    </location>
</feature>
<feature type="compositionally biased region" description="Low complexity" evidence="3">
    <location>
        <begin position="178"/>
        <end position="229"/>
    </location>
</feature>
<feature type="compositionally biased region" description="Low complexity" evidence="3">
    <location>
        <begin position="279"/>
        <end position="291"/>
    </location>
</feature>
<feature type="binding site" evidence="2">
    <location>
        <begin position="410"/>
        <end position="417"/>
    </location>
    <ligand>
        <name>GTP</name>
        <dbReference type="ChEBI" id="CHEBI:37565"/>
    </ligand>
</feature>
<feature type="binding site" evidence="2">
    <location>
        <begin position="456"/>
        <end position="460"/>
    </location>
    <ligand>
        <name>GTP</name>
        <dbReference type="ChEBI" id="CHEBI:37565"/>
    </ligand>
</feature>
<feature type="binding site" evidence="2">
    <location>
        <begin position="510"/>
        <end position="513"/>
    </location>
    <ligand>
        <name>GTP</name>
        <dbReference type="ChEBI" id="CHEBI:37565"/>
    </ligand>
</feature>
<dbReference type="EMBL" id="CP000050">
    <property type="protein sequence ID" value="AAY48671.1"/>
    <property type="status" value="ALT_INIT"/>
    <property type="molecule type" value="Genomic_DNA"/>
</dbReference>
<dbReference type="RefSeq" id="WP_019237528.1">
    <property type="nucleotide sequence ID" value="NZ_CP155948.1"/>
</dbReference>
<dbReference type="SMR" id="Q4UWA2"/>
<dbReference type="KEGG" id="xcb:XC_1605"/>
<dbReference type="HOGENOM" id="CLU_006301_6_0_6"/>
<dbReference type="Proteomes" id="UP000000420">
    <property type="component" value="Chromosome"/>
</dbReference>
<dbReference type="GO" id="GO:0005829">
    <property type="term" value="C:cytosol"/>
    <property type="evidence" value="ECO:0007669"/>
    <property type="project" value="TreeGrafter"/>
</dbReference>
<dbReference type="GO" id="GO:0005525">
    <property type="term" value="F:GTP binding"/>
    <property type="evidence" value="ECO:0007669"/>
    <property type="project" value="UniProtKB-KW"/>
</dbReference>
<dbReference type="GO" id="GO:0003924">
    <property type="term" value="F:GTPase activity"/>
    <property type="evidence" value="ECO:0007669"/>
    <property type="project" value="UniProtKB-UniRule"/>
</dbReference>
<dbReference type="GO" id="GO:0097216">
    <property type="term" value="F:guanosine tetraphosphate binding"/>
    <property type="evidence" value="ECO:0007669"/>
    <property type="project" value="UniProtKB-ARBA"/>
</dbReference>
<dbReference type="GO" id="GO:0003743">
    <property type="term" value="F:translation initiation factor activity"/>
    <property type="evidence" value="ECO:0007669"/>
    <property type="project" value="UniProtKB-UniRule"/>
</dbReference>
<dbReference type="CDD" id="cd01887">
    <property type="entry name" value="IF2_eIF5B"/>
    <property type="match status" value="1"/>
</dbReference>
<dbReference type="CDD" id="cd03702">
    <property type="entry name" value="IF2_mtIF2_II"/>
    <property type="match status" value="1"/>
</dbReference>
<dbReference type="CDD" id="cd03692">
    <property type="entry name" value="mtIF2_IVc"/>
    <property type="match status" value="1"/>
</dbReference>
<dbReference type="FunFam" id="2.40.30.10:FF:000008">
    <property type="entry name" value="Translation initiation factor IF-2"/>
    <property type="match status" value="1"/>
</dbReference>
<dbReference type="FunFam" id="2.40.30.10:FF:000054">
    <property type="entry name" value="Translation initiation factor IF-2"/>
    <property type="match status" value="1"/>
</dbReference>
<dbReference type="FunFam" id="3.40.50.10050:FF:000001">
    <property type="entry name" value="Translation initiation factor IF-2"/>
    <property type="match status" value="1"/>
</dbReference>
<dbReference type="FunFam" id="3.40.50.300:FF:000019">
    <property type="entry name" value="Translation initiation factor IF-2"/>
    <property type="match status" value="1"/>
</dbReference>
<dbReference type="Gene3D" id="3.40.50.300">
    <property type="entry name" value="P-loop containing nucleotide triphosphate hydrolases"/>
    <property type="match status" value="1"/>
</dbReference>
<dbReference type="Gene3D" id="3.30.56.50">
    <property type="entry name" value="Putative DNA-binding domain, N-terminal subdomain of bacterial translation initiation factor IF2"/>
    <property type="match status" value="1"/>
</dbReference>
<dbReference type="Gene3D" id="2.40.30.10">
    <property type="entry name" value="Translation factors"/>
    <property type="match status" value="2"/>
</dbReference>
<dbReference type="Gene3D" id="3.40.50.10050">
    <property type="entry name" value="Translation initiation factor IF- 2, domain 3"/>
    <property type="match status" value="1"/>
</dbReference>
<dbReference type="HAMAP" id="MF_00100_B">
    <property type="entry name" value="IF_2_B"/>
    <property type="match status" value="1"/>
</dbReference>
<dbReference type="InterPro" id="IPR009061">
    <property type="entry name" value="DNA-bd_dom_put_sf"/>
</dbReference>
<dbReference type="InterPro" id="IPR053905">
    <property type="entry name" value="EF-G-like_DII"/>
</dbReference>
<dbReference type="InterPro" id="IPR004161">
    <property type="entry name" value="EFTu-like_2"/>
</dbReference>
<dbReference type="InterPro" id="IPR013575">
    <property type="entry name" value="IF2_assoc_dom_bac"/>
</dbReference>
<dbReference type="InterPro" id="IPR044145">
    <property type="entry name" value="IF2_II"/>
</dbReference>
<dbReference type="InterPro" id="IPR006847">
    <property type="entry name" value="IF2_N"/>
</dbReference>
<dbReference type="InterPro" id="IPR027417">
    <property type="entry name" value="P-loop_NTPase"/>
</dbReference>
<dbReference type="InterPro" id="IPR005225">
    <property type="entry name" value="Small_GTP-bd"/>
</dbReference>
<dbReference type="InterPro" id="IPR000795">
    <property type="entry name" value="T_Tr_GTP-bd_dom"/>
</dbReference>
<dbReference type="InterPro" id="IPR000178">
    <property type="entry name" value="TF_IF2_bacterial-like"/>
</dbReference>
<dbReference type="InterPro" id="IPR015760">
    <property type="entry name" value="TIF_IF2"/>
</dbReference>
<dbReference type="InterPro" id="IPR023115">
    <property type="entry name" value="TIF_IF2_dom3"/>
</dbReference>
<dbReference type="InterPro" id="IPR036925">
    <property type="entry name" value="TIF_IF2_dom3_sf"/>
</dbReference>
<dbReference type="InterPro" id="IPR009000">
    <property type="entry name" value="Transl_B-barrel_sf"/>
</dbReference>
<dbReference type="NCBIfam" id="TIGR00487">
    <property type="entry name" value="IF-2"/>
    <property type="match status" value="1"/>
</dbReference>
<dbReference type="NCBIfam" id="TIGR00231">
    <property type="entry name" value="small_GTP"/>
    <property type="match status" value="1"/>
</dbReference>
<dbReference type="PANTHER" id="PTHR43381:SF5">
    <property type="entry name" value="TR-TYPE G DOMAIN-CONTAINING PROTEIN"/>
    <property type="match status" value="1"/>
</dbReference>
<dbReference type="PANTHER" id="PTHR43381">
    <property type="entry name" value="TRANSLATION INITIATION FACTOR IF-2-RELATED"/>
    <property type="match status" value="1"/>
</dbReference>
<dbReference type="Pfam" id="PF22042">
    <property type="entry name" value="EF-G_D2"/>
    <property type="match status" value="1"/>
</dbReference>
<dbReference type="Pfam" id="PF00009">
    <property type="entry name" value="GTP_EFTU"/>
    <property type="match status" value="1"/>
</dbReference>
<dbReference type="Pfam" id="PF03144">
    <property type="entry name" value="GTP_EFTU_D2"/>
    <property type="match status" value="1"/>
</dbReference>
<dbReference type="Pfam" id="PF11987">
    <property type="entry name" value="IF-2"/>
    <property type="match status" value="1"/>
</dbReference>
<dbReference type="Pfam" id="PF08364">
    <property type="entry name" value="IF2_assoc"/>
    <property type="match status" value="1"/>
</dbReference>
<dbReference type="Pfam" id="PF04760">
    <property type="entry name" value="IF2_N"/>
    <property type="match status" value="1"/>
</dbReference>
<dbReference type="SUPFAM" id="SSF52156">
    <property type="entry name" value="Initiation factor IF2/eIF5b, domain 3"/>
    <property type="match status" value="1"/>
</dbReference>
<dbReference type="SUPFAM" id="SSF52540">
    <property type="entry name" value="P-loop containing nucleoside triphosphate hydrolases"/>
    <property type="match status" value="1"/>
</dbReference>
<dbReference type="SUPFAM" id="SSF46955">
    <property type="entry name" value="Putative DNA-binding domain"/>
    <property type="match status" value="1"/>
</dbReference>
<dbReference type="SUPFAM" id="SSF50447">
    <property type="entry name" value="Translation proteins"/>
    <property type="match status" value="2"/>
</dbReference>
<dbReference type="PROSITE" id="PS51722">
    <property type="entry name" value="G_TR_2"/>
    <property type="match status" value="1"/>
</dbReference>
<dbReference type="PROSITE" id="PS01176">
    <property type="entry name" value="IF2"/>
    <property type="match status" value="1"/>
</dbReference>
<reference key="1">
    <citation type="journal article" date="2005" name="Genome Res.">
        <title>Comparative and functional genomic analyses of the pathogenicity of phytopathogen Xanthomonas campestris pv. campestris.</title>
        <authorList>
            <person name="Qian W."/>
            <person name="Jia Y."/>
            <person name="Ren S.-X."/>
            <person name="He Y.-Q."/>
            <person name="Feng J.-X."/>
            <person name="Lu L.-F."/>
            <person name="Sun Q."/>
            <person name="Ying G."/>
            <person name="Tang D.-J."/>
            <person name="Tang H."/>
            <person name="Wu W."/>
            <person name="Hao P."/>
            <person name="Wang L."/>
            <person name="Jiang B.-L."/>
            <person name="Zeng S."/>
            <person name="Gu W.-Y."/>
            <person name="Lu G."/>
            <person name="Rong L."/>
            <person name="Tian Y."/>
            <person name="Yao Z."/>
            <person name="Fu G."/>
            <person name="Chen B."/>
            <person name="Fang R."/>
            <person name="Qiang B."/>
            <person name="Chen Z."/>
            <person name="Zhao G.-P."/>
            <person name="Tang J.-L."/>
            <person name="He C."/>
        </authorList>
    </citation>
    <scope>NUCLEOTIDE SEQUENCE [LARGE SCALE GENOMIC DNA]</scope>
    <source>
        <strain>8004</strain>
    </source>
</reference>
<gene>
    <name evidence="2" type="primary">infB</name>
    <name type="ordered locus">XC_1605</name>
</gene>
<proteinExistence type="inferred from homology"/>
<protein>
    <recommendedName>
        <fullName evidence="2">Translation initiation factor IF-2</fullName>
    </recommendedName>
</protein>
<sequence>MSQQTTIRKLAELVNTPVDKLLVQLAEAGMKFSGPDQVVTSTEKMKLLGFLRRTHGKADTPAEAASEAAKKITLNRRKLQEVTVNAGRTKTTVNVEVRQKRTYVKSENEGSGRAAPMTPDEERADILAKLAASRQRNLDEQQRLAESDRARDEAIQRKRDEEQAAKDRVEAERKAAEEAAAAASAPAPVAAAPAPSSAPAARAPSSPSSAPRPARPAGASPASRPATPARPDDRNNAAKHKTRGSHVMVAGVEDDDATKRFAGQLHLSAADRARRSNVRGKPTGRPGSSSSRRNDGGRGSNQSNSGPHGFERPTAPVVREVAIGETITVADLAQKLALKGGDVVKALFKMGVMATITQSIDHDTAALVTEELGHKAVRADNADFEDALLAHAEDAQGETTSRPPVVTIMGHVDHGKTSLLDYIRRTKIASGEAGGITQHIGAYHVETGRGVISFLDTPGHAAFTSMRARGAKITDIVVLVVAADDGVMPQTKEAVAHAKAAGVPLIVAVNKIDKAGADPLRVKNELLAENVVAEDFGGDTQFIEVSAKVGTGVDTLLDAISLQAEVLELKAVADGRASGTVIESSLDKGRGPVATVLVQQGALKRGDYLVCGIQYGRVRALFDETGHQPASAGPSIPVQVLGLSGVPEAGDDFVVVDDERLAKDVAQQRETKRRESRLVASATNRMEDILAQMGKGEGQQVLNLVIKADVQGSVEALKQSLVALSNDDIRINVIHSGVGGITESDANSAAASKATIIGFNVRADASARKIVESNGIDLRYFSIIYDVIDQVKQVASGLLGVEIREEIIGIAQVRDVFRSSKFGAVAGCMIIEGVVKRSKPIRVLRDSVVVFEGELESLRRFKENVDEVRNGTECGIGVKAYNDVKAGDQIECFERIEVARTL</sequence>
<name>IF2_XANC8</name>
<accession>Q4UWA2</accession>